<comment type="function">
    <text evidence="1">DNA polymerase III is a complex, multichain enzyme responsible for most of the replicative synthesis in bacteria. This DNA polymerase also exhibits 3' to 5' exonuclease activity. The alpha chain is the DNA polymerase (By similarity).</text>
</comment>
<comment type="catalytic activity">
    <reaction>
        <text>DNA(n) + a 2'-deoxyribonucleoside 5'-triphosphate = DNA(n+1) + diphosphate</text>
        <dbReference type="Rhea" id="RHEA:22508"/>
        <dbReference type="Rhea" id="RHEA-COMP:17339"/>
        <dbReference type="Rhea" id="RHEA-COMP:17340"/>
        <dbReference type="ChEBI" id="CHEBI:33019"/>
        <dbReference type="ChEBI" id="CHEBI:61560"/>
        <dbReference type="ChEBI" id="CHEBI:173112"/>
        <dbReference type="EC" id="2.7.7.7"/>
    </reaction>
</comment>
<comment type="subunit">
    <text evidence="1">DNA polymerase III contains a core (composed of alpha, epsilon and theta chains) that associates with a tau subunit. This core dimerizes to form the PolIII' complex. PolIII' associates with the gamma complex (composed of gamma, delta, delta', psi and chi chains) and with the beta chain to form the complete DNA polymerase III complex (By similarity).</text>
</comment>
<comment type="subcellular location">
    <subcellularLocation>
        <location evidence="1">Cytoplasm</location>
    </subcellularLocation>
</comment>
<comment type="similarity">
    <text evidence="2">Belongs to the DNA polymerase type-C family. DnaE subfamily.</text>
</comment>
<accession>Q6GG04</accession>
<evidence type="ECO:0000250" key="1"/>
<evidence type="ECO:0000305" key="2"/>
<keyword id="KW-0963">Cytoplasm</keyword>
<keyword id="KW-0235">DNA replication</keyword>
<keyword id="KW-0239">DNA-directed DNA polymerase</keyword>
<keyword id="KW-0548">Nucleotidyltransferase</keyword>
<keyword id="KW-0808">Transferase</keyword>
<feature type="chain" id="PRO_0000103343" description="DNA polymerase III subunit alpha">
    <location>
        <begin position="1"/>
        <end position="1065"/>
    </location>
</feature>
<gene>
    <name type="primary">dnaE</name>
    <name type="ordered locus">SAR1781</name>
</gene>
<protein>
    <recommendedName>
        <fullName>DNA polymerase III subunit alpha</fullName>
        <ecNumber>2.7.7.7</ecNumber>
    </recommendedName>
</protein>
<organism>
    <name type="scientific">Staphylococcus aureus (strain MRSA252)</name>
    <dbReference type="NCBI Taxonomy" id="282458"/>
    <lineage>
        <taxon>Bacteria</taxon>
        <taxon>Bacillati</taxon>
        <taxon>Bacillota</taxon>
        <taxon>Bacilli</taxon>
        <taxon>Bacillales</taxon>
        <taxon>Staphylococcaceae</taxon>
        <taxon>Staphylococcus</taxon>
    </lineage>
</organism>
<sequence>MVAYLNIHTAYDLLNSSLKIEDAVRLAVSENVDALAITDTNVLYGFPKFYDTCIANNIKPIFGMTIYVTNGLNNIETVVLAKDNYGLKDLYQLSSEIKMNALEHVSFELLKRFSNNMIIIFKNVADEHRDIVRVFDSHEDTYLDHRSVLVQGIKHVWIQDVCYQTRHDADTISALAAIRDNTKLDLIHDQEDFGAHFLTENEIHQLDVNPEYFTQADRIAQKCNAELKYHQSLLPQYQTPNDESAKKYLWRVLVTQLKKLELNYDVYLERLKYEYKVITNMGFEDYFLIVSDLIHYAKTNDVMVGPGRGSSAGSLVSYLLGITTIDPIKFNLLFERFLNPERVTMPDIDIDFEDTRREKVIQYVQEKYGELHVSGIVTFGHLLARAVARDVGRIMGFDEVTLNEISSLIPHKLGITLDEAYQIDDFKKFVHRNHRHERWFSICKKLEGLPRHTSTHAAGIIINDHPLYEYAPLTKGDTGLLTQWTMTEAERIGLLKIDFLGLRNLSIIHQILTQVKKDLGINIDIEKIPFDDQKVFELLSQGDTTGIFQLESDGVRSVLKKLKPEHFEDIVAVTSLYRPGPMEEIPTYITRRHDPSKVQYLHPHLEPILKNTYGVIIYQEQIMQIASTFANFSYGEADILRRAMSKKNRAVLESERQHFIEGTKQNGYHEDISKQIFDLILKFADYGFPRAHAVSYSKIAYIMSFLKVHYPNYFYANILSNVIGSEKKTAQMIEEAKKQGITILPPNINESHWFYKPSQEGIYLSIGTIKGVGYQSVKVIVEERYQNGKFKDFFDFARRIPKRVKTRKLLEALILVGAFDAFGKTRSTLLQAIDQVLDGDLNIEQDGFLFDILTPKQMYEDKEELPDALISQYEKEYLGFYVSQHPVDKKFVAKQYLTIFKLSNAQNNKPILVQFDKVKQIRTKNGQNMAFVTLNDGIETLDGVIFPNQFKKYEELLSHNDLFIVSGKFDLRKQQRQLIINEIQTLATFEEQKLAFAKQIIIRNKSQIDMFEEMIKATKENANDVVLSFYDETIKQMTTLGYINQKDSMFNNFIQSFNPSDIRLI</sequence>
<proteinExistence type="inferred from homology"/>
<name>DPO3A_STAAR</name>
<dbReference type="EC" id="2.7.7.7"/>
<dbReference type="EMBL" id="BX571856">
    <property type="protein sequence ID" value="CAG40772.1"/>
    <property type="molecule type" value="Genomic_DNA"/>
</dbReference>
<dbReference type="RefSeq" id="WP_000226930.1">
    <property type="nucleotide sequence ID" value="NC_002952.2"/>
</dbReference>
<dbReference type="SMR" id="Q6GG04"/>
<dbReference type="KEGG" id="sar:SAR1781"/>
<dbReference type="HOGENOM" id="CLU_001600_0_0_9"/>
<dbReference type="Proteomes" id="UP000000596">
    <property type="component" value="Chromosome"/>
</dbReference>
<dbReference type="GO" id="GO:0005737">
    <property type="term" value="C:cytoplasm"/>
    <property type="evidence" value="ECO:0007669"/>
    <property type="project" value="UniProtKB-SubCell"/>
</dbReference>
<dbReference type="GO" id="GO:0008408">
    <property type="term" value="F:3'-5' exonuclease activity"/>
    <property type="evidence" value="ECO:0007669"/>
    <property type="project" value="InterPro"/>
</dbReference>
<dbReference type="GO" id="GO:0003887">
    <property type="term" value="F:DNA-directed DNA polymerase activity"/>
    <property type="evidence" value="ECO:0007669"/>
    <property type="project" value="UniProtKB-KW"/>
</dbReference>
<dbReference type="GO" id="GO:0003676">
    <property type="term" value="F:nucleic acid binding"/>
    <property type="evidence" value="ECO:0007669"/>
    <property type="project" value="InterPro"/>
</dbReference>
<dbReference type="GO" id="GO:0006260">
    <property type="term" value="P:DNA replication"/>
    <property type="evidence" value="ECO:0007669"/>
    <property type="project" value="UniProtKB-KW"/>
</dbReference>
<dbReference type="CDD" id="cd04485">
    <property type="entry name" value="DnaE_OBF"/>
    <property type="match status" value="1"/>
</dbReference>
<dbReference type="CDD" id="cd07431">
    <property type="entry name" value="PHP_PolIIIA"/>
    <property type="match status" value="1"/>
</dbReference>
<dbReference type="Gene3D" id="1.10.150.870">
    <property type="match status" value="1"/>
</dbReference>
<dbReference type="Gene3D" id="1.10.10.1600">
    <property type="entry name" value="Bacterial DNA polymerase III alpha subunit, thumb domain"/>
    <property type="match status" value="1"/>
</dbReference>
<dbReference type="Gene3D" id="3.20.20.140">
    <property type="entry name" value="Metal-dependent hydrolases"/>
    <property type="match status" value="1"/>
</dbReference>
<dbReference type="InterPro" id="IPR011708">
    <property type="entry name" value="DNA_pol3_alpha_NTPase_dom"/>
</dbReference>
<dbReference type="InterPro" id="IPR041931">
    <property type="entry name" value="DNA_pol3_alpha_thumb_dom"/>
</dbReference>
<dbReference type="InterPro" id="IPR040982">
    <property type="entry name" value="DNA_pol3_finger"/>
</dbReference>
<dbReference type="InterPro" id="IPR004805">
    <property type="entry name" value="DnaE2/DnaE/PolC"/>
</dbReference>
<dbReference type="InterPro" id="IPR029460">
    <property type="entry name" value="DNAPol_HHH"/>
</dbReference>
<dbReference type="InterPro" id="IPR004365">
    <property type="entry name" value="NA-bd_OB_tRNA"/>
</dbReference>
<dbReference type="InterPro" id="IPR004013">
    <property type="entry name" value="PHP_dom"/>
</dbReference>
<dbReference type="InterPro" id="IPR003141">
    <property type="entry name" value="Pol/His_phosphatase_N"/>
</dbReference>
<dbReference type="InterPro" id="IPR016195">
    <property type="entry name" value="Pol/histidinol_Pase-like"/>
</dbReference>
<dbReference type="NCBIfam" id="TIGR00594">
    <property type="entry name" value="polc"/>
    <property type="match status" value="1"/>
</dbReference>
<dbReference type="PANTHER" id="PTHR32294">
    <property type="entry name" value="DNA POLYMERASE III SUBUNIT ALPHA"/>
    <property type="match status" value="1"/>
</dbReference>
<dbReference type="PANTHER" id="PTHR32294:SF0">
    <property type="entry name" value="DNA POLYMERASE III SUBUNIT ALPHA"/>
    <property type="match status" value="1"/>
</dbReference>
<dbReference type="Pfam" id="PF07733">
    <property type="entry name" value="DNA_pol3_alpha"/>
    <property type="match status" value="1"/>
</dbReference>
<dbReference type="Pfam" id="PF17657">
    <property type="entry name" value="DNA_pol3_finger"/>
    <property type="match status" value="1"/>
</dbReference>
<dbReference type="Pfam" id="PF14579">
    <property type="entry name" value="HHH_6"/>
    <property type="match status" value="1"/>
</dbReference>
<dbReference type="Pfam" id="PF02811">
    <property type="entry name" value="PHP"/>
    <property type="match status" value="1"/>
</dbReference>
<dbReference type="Pfam" id="PF01336">
    <property type="entry name" value="tRNA_anti-codon"/>
    <property type="match status" value="1"/>
</dbReference>
<dbReference type="SMART" id="SM00481">
    <property type="entry name" value="POLIIIAc"/>
    <property type="match status" value="1"/>
</dbReference>
<dbReference type="SUPFAM" id="SSF89550">
    <property type="entry name" value="PHP domain-like"/>
    <property type="match status" value="1"/>
</dbReference>
<reference key="1">
    <citation type="journal article" date="2004" name="Proc. Natl. Acad. Sci. U.S.A.">
        <title>Complete genomes of two clinical Staphylococcus aureus strains: evidence for the rapid evolution of virulence and drug resistance.</title>
        <authorList>
            <person name="Holden M.T.G."/>
            <person name="Feil E.J."/>
            <person name="Lindsay J.A."/>
            <person name="Peacock S.J."/>
            <person name="Day N.P.J."/>
            <person name="Enright M.C."/>
            <person name="Foster T.J."/>
            <person name="Moore C.E."/>
            <person name="Hurst L."/>
            <person name="Atkin R."/>
            <person name="Barron A."/>
            <person name="Bason N."/>
            <person name="Bentley S.D."/>
            <person name="Chillingworth C."/>
            <person name="Chillingworth T."/>
            <person name="Churcher C."/>
            <person name="Clark L."/>
            <person name="Corton C."/>
            <person name="Cronin A."/>
            <person name="Doggett J."/>
            <person name="Dowd L."/>
            <person name="Feltwell T."/>
            <person name="Hance Z."/>
            <person name="Harris B."/>
            <person name="Hauser H."/>
            <person name="Holroyd S."/>
            <person name="Jagels K."/>
            <person name="James K.D."/>
            <person name="Lennard N."/>
            <person name="Line A."/>
            <person name="Mayes R."/>
            <person name="Moule S."/>
            <person name="Mungall K."/>
            <person name="Ormond D."/>
            <person name="Quail M.A."/>
            <person name="Rabbinowitsch E."/>
            <person name="Rutherford K.M."/>
            <person name="Sanders M."/>
            <person name="Sharp S."/>
            <person name="Simmonds M."/>
            <person name="Stevens K."/>
            <person name="Whitehead S."/>
            <person name="Barrell B.G."/>
            <person name="Spratt B.G."/>
            <person name="Parkhill J."/>
        </authorList>
    </citation>
    <scope>NUCLEOTIDE SEQUENCE [LARGE SCALE GENOMIC DNA]</scope>
    <source>
        <strain>MRSA252</strain>
    </source>
</reference>